<name>NUCL_CHICK</name>
<evidence type="ECO:0000250" key="1"/>
<evidence type="ECO:0000255" key="2">
    <source>
        <dbReference type="PROSITE-ProRule" id="PRU00176"/>
    </source>
</evidence>
<evidence type="ECO:0000256" key="3">
    <source>
        <dbReference type="SAM" id="MobiDB-lite"/>
    </source>
</evidence>
<evidence type="ECO:0000269" key="4">
    <source>
    </source>
</evidence>
<evidence type="ECO:0000305" key="5"/>
<organism>
    <name type="scientific">Gallus gallus</name>
    <name type="common">Chicken</name>
    <dbReference type="NCBI Taxonomy" id="9031"/>
    <lineage>
        <taxon>Eukaryota</taxon>
        <taxon>Metazoa</taxon>
        <taxon>Chordata</taxon>
        <taxon>Craniata</taxon>
        <taxon>Vertebrata</taxon>
        <taxon>Euteleostomi</taxon>
        <taxon>Archelosauria</taxon>
        <taxon>Archosauria</taxon>
        <taxon>Dinosauria</taxon>
        <taxon>Saurischia</taxon>
        <taxon>Theropoda</taxon>
        <taxon>Coelurosauria</taxon>
        <taxon>Aves</taxon>
        <taxon>Neognathae</taxon>
        <taxon>Galloanserae</taxon>
        <taxon>Galliformes</taxon>
        <taxon>Phasianidae</taxon>
        <taxon>Phasianinae</taxon>
        <taxon>Gallus</taxon>
    </lineage>
</organism>
<keyword id="KW-0238">DNA-binding</keyword>
<keyword id="KW-0488">Methylation</keyword>
<keyword id="KW-0539">Nucleus</keyword>
<keyword id="KW-0597">Phosphoprotein</keyword>
<keyword id="KW-1185">Reference proteome</keyword>
<keyword id="KW-0677">Repeat</keyword>
<keyword id="KW-0694">RNA-binding</keyword>
<feature type="chain" id="PRO_0000081695" description="Nucleolin">
    <location>
        <begin position="1"/>
        <end position="694"/>
    </location>
</feature>
<feature type="repeat" description="1">
    <location>
        <begin position="55"/>
        <end position="61"/>
    </location>
</feature>
<feature type="repeat" description="2">
    <location>
        <begin position="62"/>
        <end position="68"/>
    </location>
</feature>
<feature type="repeat" description="3">
    <location>
        <begin position="69"/>
        <end position="75"/>
    </location>
</feature>
<feature type="repeat" description="4">
    <location>
        <begin position="76"/>
        <end position="82"/>
    </location>
</feature>
<feature type="repeat" description="5">
    <location>
        <begin position="84"/>
        <end position="90"/>
    </location>
</feature>
<feature type="domain" description="RRM 1" evidence="2">
    <location>
        <begin position="281"/>
        <end position="357"/>
    </location>
</feature>
<feature type="domain" description="RRM 2" evidence="2">
    <location>
        <begin position="371"/>
        <end position="445"/>
    </location>
</feature>
<feature type="domain" description="RRM 3" evidence="2">
    <location>
        <begin position="461"/>
        <end position="535"/>
    </location>
</feature>
<feature type="domain" description="RRM 4" evidence="2">
    <location>
        <begin position="553"/>
        <end position="628"/>
    </location>
</feature>
<feature type="region of interest" description="Disordered" evidence="3">
    <location>
        <begin position="1"/>
        <end position="277"/>
    </location>
</feature>
<feature type="region of interest" description="5 X 7 AA tandem repeats of X-T-P-X-K-K-X">
    <location>
        <begin position="55"/>
        <end position="90"/>
    </location>
</feature>
<feature type="region of interest" description="Disordered" evidence="3">
    <location>
        <begin position="631"/>
        <end position="694"/>
    </location>
</feature>
<feature type="compositionally biased region" description="Acidic residues" evidence="3">
    <location>
        <begin position="26"/>
        <end position="40"/>
    </location>
</feature>
<feature type="compositionally biased region" description="Low complexity" evidence="3">
    <location>
        <begin position="46"/>
        <end position="108"/>
    </location>
</feature>
<feature type="compositionally biased region" description="Acidic residues" evidence="3">
    <location>
        <begin position="116"/>
        <end position="142"/>
    </location>
</feature>
<feature type="compositionally biased region" description="Low complexity" evidence="3">
    <location>
        <begin position="143"/>
        <end position="168"/>
    </location>
</feature>
<feature type="compositionally biased region" description="Acidic residues" evidence="3">
    <location>
        <begin position="171"/>
        <end position="194"/>
    </location>
</feature>
<feature type="compositionally biased region" description="Low complexity" evidence="3">
    <location>
        <begin position="196"/>
        <end position="213"/>
    </location>
</feature>
<feature type="compositionally biased region" description="Acidic residues" evidence="3">
    <location>
        <begin position="218"/>
        <end position="246"/>
    </location>
</feature>
<feature type="compositionally biased region" description="Gly residues" evidence="3">
    <location>
        <begin position="633"/>
        <end position="680"/>
    </location>
</feature>
<feature type="compositionally biased region" description="Basic and acidic residues" evidence="3">
    <location>
        <begin position="681"/>
        <end position="694"/>
    </location>
</feature>
<feature type="modified residue" description="Phosphoserine" evidence="1">
    <location>
        <position position="116"/>
    </location>
</feature>
<feature type="modified residue" description="Phosphoserine" evidence="1">
    <location>
        <position position="136"/>
    </location>
</feature>
<feature type="modified residue" description="Phosphoserine" evidence="1">
    <location>
        <position position="171"/>
    </location>
</feature>
<feature type="sequence conflict" description="In Ref. 3; AAA48983." evidence="5" ref="3">
    <original>A</original>
    <variation>R</variation>
    <location>
        <position position="419"/>
    </location>
</feature>
<feature type="sequence conflict" description="In Ref. 3; AAA48983." evidence="5" ref="3">
    <original>N</original>
    <variation>T</variation>
    <location>
        <position position="520"/>
    </location>
</feature>
<sequence length="694" mass="75640">MVKLAKTPKNQMKQKKMAPPPKKVEESEEEESSDLEESSGEEVMVPPKKQQKAAVTPAKKAATPAKKAATPAKKAVTPAKKAVATPAKKAVAPSPKKAAVVGKGAKNGKNAKKEESEEEDEDDEDDEEDEDEEEESDEEEEPAVPVKPAAKKSAAAVPAKKPAVVPAKQESEEEEEEDDEEEDEEDDESEDEAMDTTPAPVKKPTPAKATPAKAKAESEDEEDEEDEDEDEEDEDDEEEDEEESEDEKPVKEAPGKRKKEMANKSAPEAKKKKTETPASAFSLFVKNLTPTKDYEELRTAIKEFFGKKNLQVSEVRIGSSKRFGYVDFLSAEDMDKALQLNGKKLMGLEIKLEKAKSKESLKENKKERDARTLFVKNLPYRVTEDEMKNVFENALEVRLVLNKEGSSKGMAYIEFKTEAEAEKALEEKQGTEVDGRAMVIDYTGEKSQQESQKGGGERESKTLIVNNLSYAASEETLQELFKKATSIKMPQNNQGRPKGYAFVEFPTAEDAKEALNSCNNTEIEGRAIRLEFSSPSWQKGNMNARGGFNQQSKTLFVRGLSEDTTEETLRESFEGSISARIVTDRDTGSSKGFGFVDFSSPEDAKAAKEAMEDGEIDGNKVTLDFAKPKGEFQRGGGFGGGFGGRGGRGGRGGGRGGFGGRGGGRGFGGRGGGFRGGRGGGGDHKPQGKKIKFE</sequence>
<gene>
    <name type="primary">NCL</name>
</gene>
<proteinExistence type="evidence at protein level"/>
<comment type="function">
    <text>Nucleolin is the major nucleolar protein of growing eukaryotic cells. It is found associated with intranucleolar chromatin and pre-ribosomal particles. It induces chromatin decondensation by binding to histone H1. It is thought to play a role in pre-rRNA transcription and ribosome assembly.</text>
</comment>
<comment type="subcellular location">
    <subcellularLocation>
        <location>Nucleus</location>
        <location>Nucleolus</location>
    </subcellularLocation>
</comment>
<comment type="PTM">
    <text evidence="4">Highly phosphorylated during mitosis.</text>
</comment>
<accession>P15771</accession>
<protein>
    <recommendedName>
        <fullName>Nucleolin</fullName>
    </recommendedName>
    <alternativeName>
        <fullName>Protein C23</fullName>
    </alternativeName>
</protein>
<dbReference type="EMBL" id="X17199">
    <property type="protein sequence ID" value="CAA35060.1"/>
    <property type="molecule type" value="mRNA"/>
</dbReference>
<dbReference type="EMBL" id="M21791">
    <property type="protein sequence ID" value="AAA48983.1"/>
    <property type="molecule type" value="mRNA"/>
</dbReference>
<dbReference type="PIR" id="S08414">
    <property type="entry name" value="DNCHNL"/>
</dbReference>
<dbReference type="RefSeq" id="NP_990596.1">
    <property type="nucleotide sequence ID" value="NM_205265.1"/>
</dbReference>
<dbReference type="SMR" id="P15771"/>
<dbReference type="BioGRID" id="676461">
    <property type="interactions" value="1"/>
</dbReference>
<dbReference type="FunCoup" id="P15771">
    <property type="interactions" value="2065"/>
</dbReference>
<dbReference type="STRING" id="9031.ENSGALP00000045642"/>
<dbReference type="GlyGen" id="P15771">
    <property type="glycosylation" value="4 sites"/>
</dbReference>
<dbReference type="PaxDb" id="9031-ENSGALP00000032625"/>
<dbReference type="Ensembl" id="ENSGALT00010037623.1">
    <property type="protein sequence ID" value="ENSGALP00010021748.1"/>
    <property type="gene ID" value="ENSGALG00010015618.1"/>
</dbReference>
<dbReference type="GeneID" id="396201"/>
<dbReference type="KEGG" id="gga:396201"/>
<dbReference type="CTD" id="4691"/>
<dbReference type="VEuPathDB" id="HostDB:geneid_396201"/>
<dbReference type="eggNOG" id="KOG0123">
    <property type="taxonomic scope" value="Eukaryota"/>
</dbReference>
<dbReference type="GeneTree" id="ENSGT00940000163473"/>
<dbReference type="InParanoid" id="P15771"/>
<dbReference type="OrthoDB" id="167718at2759"/>
<dbReference type="PhylomeDB" id="P15771"/>
<dbReference type="PRO" id="PR:P15771"/>
<dbReference type="Proteomes" id="UP000000539">
    <property type="component" value="Chromosome 9"/>
</dbReference>
<dbReference type="GO" id="GO:0005730">
    <property type="term" value="C:nucleolus"/>
    <property type="evidence" value="ECO:0007669"/>
    <property type="project" value="UniProtKB-SubCell"/>
</dbReference>
<dbReference type="GO" id="GO:0005681">
    <property type="term" value="C:spliceosomal complex"/>
    <property type="evidence" value="ECO:0000318"/>
    <property type="project" value="GO_Central"/>
</dbReference>
<dbReference type="GO" id="GO:0003677">
    <property type="term" value="F:DNA binding"/>
    <property type="evidence" value="ECO:0007669"/>
    <property type="project" value="UniProtKB-KW"/>
</dbReference>
<dbReference type="GO" id="GO:0003723">
    <property type="term" value="F:RNA binding"/>
    <property type="evidence" value="ECO:0000318"/>
    <property type="project" value="GO_Central"/>
</dbReference>
<dbReference type="GO" id="GO:0048026">
    <property type="term" value="P:positive regulation of mRNA splicing, via spliceosome"/>
    <property type="evidence" value="ECO:0000318"/>
    <property type="project" value="GO_Central"/>
</dbReference>
<dbReference type="CDD" id="cd12403">
    <property type="entry name" value="RRM1_NCL"/>
    <property type="match status" value="1"/>
</dbReference>
<dbReference type="CDD" id="cd12405">
    <property type="entry name" value="RRM3_NCL"/>
    <property type="match status" value="1"/>
</dbReference>
<dbReference type="CDD" id="cd12406">
    <property type="entry name" value="RRM4_NCL"/>
    <property type="match status" value="1"/>
</dbReference>
<dbReference type="FunFam" id="3.30.70.330:FF:000278">
    <property type="entry name" value="Nucleolin"/>
    <property type="match status" value="1"/>
</dbReference>
<dbReference type="FunFam" id="3.30.70.330:FF:001072">
    <property type="entry name" value="Nucleolin"/>
    <property type="match status" value="1"/>
</dbReference>
<dbReference type="FunFam" id="3.30.70.330:FF:000264">
    <property type="entry name" value="nucleolin"/>
    <property type="match status" value="1"/>
</dbReference>
<dbReference type="Gene3D" id="3.30.70.330">
    <property type="match status" value="4"/>
</dbReference>
<dbReference type="InterPro" id="IPR050502">
    <property type="entry name" value="Euk_RNA-bind_prot"/>
</dbReference>
<dbReference type="InterPro" id="IPR034230">
    <property type="entry name" value="Nucleolin_RRM1"/>
</dbReference>
<dbReference type="InterPro" id="IPR034234">
    <property type="entry name" value="Nucleolin_RRM3"/>
</dbReference>
<dbReference type="InterPro" id="IPR034235">
    <property type="entry name" value="Nucleolin_RRM4"/>
</dbReference>
<dbReference type="InterPro" id="IPR012677">
    <property type="entry name" value="Nucleotide-bd_a/b_plait_sf"/>
</dbReference>
<dbReference type="InterPro" id="IPR035979">
    <property type="entry name" value="RBD_domain_sf"/>
</dbReference>
<dbReference type="InterPro" id="IPR000504">
    <property type="entry name" value="RRM_dom"/>
</dbReference>
<dbReference type="InterPro" id="IPR003954">
    <property type="entry name" value="RRM_dom_euk"/>
</dbReference>
<dbReference type="PANTHER" id="PTHR48025">
    <property type="entry name" value="OS02G0815200 PROTEIN"/>
    <property type="match status" value="1"/>
</dbReference>
<dbReference type="PANTHER" id="PTHR48025:SF1">
    <property type="entry name" value="RRM DOMAIN-CONTAINING PROTEIN"/>
    <property type="match status" value="1"/>
</dbReference>
<dbReference type="Pfam" id="PF00076">
    <property type="entry name" value="RRM_1"/>
    <property type="match status" value="4"/>
</dbReference>
<dbReference type="SMART" id="SM00360">
    <property type="entry name" value="RRM"/>
    <property type="match status" value="4"/>
</dbReference>
<dbReference type="SMART" id="SM00361">
    <property type="entry name" value="RRM_1"/>
    <property type="match status" value="3"/>
</dbReference>
<dbReference type="SUPFAM" id="SSF54928">
    <property type="entry name" value="RNA-binding domain, RBD"/>
    <property type="match status" value="4"/>
</dbReference>
<dbReference type="PROSITE" id="PS50102">
    <property type="entry name" value="RRM"/>
    <property type="match status" value="4"/>
</dbReference>
<reference key="1">
    <citation type="journal article" date="1990" name="Nucleic Acids Res.">
        <title>cDNA sequences of chicken nucleolin/C23 and NO38/B23, two major nucleolar proteins.</title>
        <authorList>
            <person name="Maridor G."/>
            <person name="Nigg E.A."/>
        </authorList>
    </citation>
    <scope>NUCLEOTIDE SEQUENCE [MRNA]</scope>
</reference>
<reference key="2">
    <citation type="journal article" date="1990" name="Biochim. Biophys. Acta">
        <title>Structure and developmental expression of chicken nucleolin and NO38: coordinate expression of two abundant non-ribosomal nucleolar proteins.</title>
        <authorList>
            <person name="Maridor G."/>
            <person name="Krek W."/>
            <person name="Nigg E.A."/>
        </authorList>
    </citation>
    <scope>DISCUSSION OF SEQUENCE</scope>
</reference>
<reference key="3">
    <citation type="journal article" date="1989" name="Cell">
        <title>Major nucleolar proteins shuttle between nucleus and cytoplasm.</title>
        <authorList>
            <person name="Borer R.A."/>
            <person name="Lehner C.F."/>
            <person name="Eppenberger H.M."/>
            <person name="Nigg E.A."/>
        </authorList>
    </citation>
    <scope>NUCLEOTIDE SEQUENCE [MRNA] OF 407-694</scope>
</reference>
<reference key="4">
    <citation type="journal article" date="1990" name="Cell">
        <title>Identification of major nucleolar proteins as candidate mitotic substrates of cdc2 kinase.</title>
        <authorList>
            <person name="Peter M."/>
            <person name="Nakagawa J."/>
            <person name="Doree M."/>
            <person name="Labbe J.C."/>
            <person name="Nigg E.A."/>
        </authorList>
    </citation>
    <scope>PHOSPHORYLATION</scope>
</reference>